<reference key="1">
    <citation type="submission" date="2009-05" db="EMBL/GenBank/DDBJ databases">
        <title>Complete sequence of Tolumonas auensis DSM 9187.</title>
        <authorList>
            <consortium name="US DOE Joint Genome Institute"/>
            <person name="Lucas S."/>
            <person name="Copeland A."/>
            <person name="Lapidus A."/>
            <person name="Glavina del Rio T."/>
            <person name="Tice H."/>
            <person name="Bruce D."/>
            <person name="Goodwin L."/>
            <person name="Pitluck S."/>
            <person name="Chertkov O."/>
            <person name="Brettin T."/>
            <person name="Detter J.C."/>
            <person name="Han C."/>
            <person name="Larimer F."/>
            <person name="Land M."/>
            <person name="Hauser L."/>
            <person name="Kyrpides N."/>
            <person name="Mikhailova N."/>
            <person name="Spring S."/>
            <person name="Beller H."/>
        </authorList>
    </citation>
    <scope>NUCLEOTIDE SEQUENCE [LARGE SCALE GENOMIC DNA]</scope>
    <source>
        <strain>DSM 9187 / NBRC 110442 / TA 4</strain>
    </source>
</reference>
<protein>
    <recommendedName>
        <fullName evidence="1">Phosphopantetheine adenylyltransferase</fullName>
        <ecNumber evidence="1">2.7.7.3</ecNumber>
    </recommendedName>
    <alternativeName>
        <fullName evidence="1">Dephospho-CoA pyrophosphorylase</fullName>
    </alternativeName>
    <alternativeName>
        <fullName evidence="1">Pantetheine-phosphate adenylyltransferase</fullName>
        <shortName evidence="1">PPAT</shortName>
    </alternativeName>
</protein>
<comment type="function">
    <text evidence="1">Reversibly transfers an adenylyl group from ATP to 4'-phosphopantetheine, yielding dephospho-CoA (dPCoA) and pyrophosphate.</text>
</comment>
<comment type="catalytic activity">
    <reaction evidence="1">
        <text>(R)-4'-phosphopantetheine + ATP + H(+) = 3'-dephospho-CoA + diphosphate</text>
        <dbReference type="Rhea" id="RHEA:19801"/>
        <dbReference type="ChEBI" id="CHEBI:15378"/>
        <dbReference type="ChEBI" id="CHEBI:30616"/>
        <dbReference type="ChEBI" id="CHEBI:33019"/>
        <dbReference type="ChEBI" id="CHEBI:57328"/>
        <dbReference type="ChEBI" id="CHEBI:61723"/>
        <dbReference type="EC" id="2.7.7.3"/>
    </reaction>
</comment>
<comment type="cofactor">
    <cofactor evidence="1">
        <name>Mg(2+)</name>
        <dbReference type="ChEBI" id="CHEBI:18420"/>
    </cofactor>
</comment>
<comment type="pathway">
    <text evidence="1">Cofactor biosynthesis; coenzyme A biosynthesis; CoA from (R)-pantothenate: step 4/5.</text>
</comment>
<comment type="subunit">
    <text evidence="1">Homohexamer.</text>
</comment>
<comment type="subcellular location">
    <subcellularLocation>
        <location evidence="1">Cytoplasm</location>
    </subcellularLocation>
</comment>
<comment type="similarity">
    <text evidence="1">Belongs to the bacterial CoaD family.</text>
</comment>
<proteinExistence type="inferred from homology"/>
<organism>
    <name type="scientific">Tolumonas auensis (strain DSM 9187 / NBRC 110442 / TA 4)</name>
    <dbReference type="NCBI Taxonomy" id="595494"/>
    <lineage>
        <taxon>Bacteria</taxon>
        <taxon>Pseudomonadati</taxon>
        <taxon>Pseudomonadota</taxon>
        <taxon>Gammaproteobacteria</taxon>
        <taxon>Aeromonadales</taxon>
        <taxon>Aeromonadaceae</taxon>
        <taxon>Tolumonas</taxon>
    </lineage>
</organism>
<dbReference type="EC" id="2.7.7.3" evidence="1"/>
<dbReference type="EMBL" id="CP001616">
    <property type="protein sequence ID" value="ACQ91762.1"/>
    <property type="molecule type" value="Genomic_DNA"/>
</dbReference>
<dbReference type="RefSeq" id="WP_012728361.1">
    <property type="nucleotide sequence ID" value="NC_012691.1"/>
</dbReference>
<dbReference type="SMR" id="C4L7W3"/>
<dbReference type="STRING" id="595494.Tola_0132"/>
<dbReference type="KEGG" id="tau:Tola_0132"/>
<dbReference type="eggNOG" id="COG0669">
    <property type="taxonomic scope" value="Bacteria"/>
</dbReference>
<dbReference type="HOGENOM" id="CLU_100149_0_1_6"/>
<dbReference type="OrthoDB" id="9806661at2"/>
<dbReference type="UniPathway" id="UPA00241">
    <property type="reaction ID" value="UER00355"/>
</dbReference>
<dbReference type="Proteomes" id="UP000009073">
    <property type="component" value="Chromosome"/>
</dbReference>
<dbReference type="GO" id="GO:0005737">
    <property type="term" value="C:cytoplasm"/>
    <property type="evidence" value="ECO:0007669"/>
    <property type="project" value="UniProtKB-SubCell"/>
</dbReference>
<dbReference type="GO" id="GO:0005524">
    <property type="term" value="F:ATP binding"/>
    <property type="evidence" value="ECO:0007669"/>
    <property type="project" value="UniProtKB-KW"/>
</dbReference>
<dbReference type="GO" id="GO:0004595">
    <property type="term" value="F:pantetheine-phosphate adenylyltransferase activity"/>
    <property type="evidence" value="ECO:0007669"/>
    <property type="project" value="UniProtKB-UniRule"/>
</dbReference>
<dbReference type="GO" id="GO:0015937">
    <property type="term" value="P:coenzyme A biosynthetic process"/>
    <property type="evidence" value="ECO:0007669"/>
    <property type="project" value="UniProtKB-UniRule"/>
</dbReference>
<dbReference type="CDD" id="cd02163">
    <property type="entry name" value="PPAT"/>
    <property type="match status" value="1"/>
</dbReference>
<dbReference type="Gene3D" id="3.40.50.620">
    <property type="entry name" value="HUPs"/>
    <property type="match status" value="1"/>
</dbReference>
<dbReference type="HAMAP" id="MF_00151">
    <property type="entry name" value="PPAT_bact"/>
    <property type="match status" value="1"/>
</dbReference>
<dbReference type="InterPro" id="IPR004821">
    <property type="entry name" value="Cyt_trans-like"/>
</dbReference>
<dbReference type="InterPro" id="IPR001980">
    <property type="entry name" value="PPAT"/>
</dbReference>
<dbReference type="InterPro" id="IPR014729">
    <property type="entry name" value="Rossmann-like_a/b/a_fold"/>
</dbReference>
<dbReference type="NCBIfam" id="TIGR01510">
    <property type="entry name" value="coaD_prev_kdtB"/>
    <property type="match status" value="1"/>
</dbReference>
<dbReference type="NCBIfam" id="TIGR00125">
    <property type="entry name" value="cyt_tran_rel"/>
    <property type="match status" value="1"/>
</dbReference>
<dbReference type="PANTHER" id="PTHR21342">
    <property type="entry name" value="PHOSPHOPANTETHEINE ADENYLYLTRANSFERASE"/>
    <property type="match status" value="1"/>
</dbReference>
<dbReference type="PANTHER" id="PTHR21342:SF1">
    <property type="entry name" value="PHOSPHOPANTETHEINE ADENYLYLTRANSFERASE"/>
    <property type="match status" value="1"/>
</dbReference>
<dbReference type="Pfam" id="PF01467">
    <property type="entry name" value="CTP_transf_like"/>
    <property type="match status" value="1"/>
</dbReference>
<dbReference type="PRINTS" id="PR01020">
    <property type="entry name" value="LPSBIOSNTHSS"/>
</dbReference>
<dbReference type="SUPFAM" id="SSF52374">
    <property type="entry name" value="Nucleotidylyl transferase"/>
    <property type="match status" value="1"/>
</dbReference>
<feature type="chain" id="PRO_1000203435" description="Phosphopantetheine adenylyltransferase">
    <location>
        <begin position="1"/>
        <end position="164"/>
    </location>
</feature>
<feature type="binding site" evidence="1">
    <location>
        <begin position="10"/>
        <end position="11"/>
    </location>
    <ligand>
        <name>ATP</name>
        <dbReference type="ChEBI" id="CHEBI:30616"/>
    </ligand>
</feature>
<feature type="binding site" evidence="1">
    <location>
        <position position="10"/>
    </location>
    <ligand>
        <name>substrate</name>
    </ligand>
</feature>
<feature type="binding site" evidence="1">
    <location>
        <position position="18"/>
    </location>
    <ligand>
        <name>ATP</name>
        <dbReference type="ChEBI" id="CHEBI:30616"/>
    </ligand>
</feature>
<feature type="binding site" evidence="1">
    <location>
        <position position="42"/>
    </location>
    <ligand>
        <name>substrate</name>
    </ligand>
</feature>
<feature type="binding site" evidence="1">
    <location>
        <position position="74"/>
    </location>
    <ligand>
        <name>substrate</name>
    </ligand>
</feature>
<feature type="binding site" evidence="1">
    <location>
        <position position="88"/>
    </location>
    <ligand>
        <name>substrate</name>
    </ligand>
</feature>
<feature type="binding site" evidence="1">
    <location>
        <begin position="89"/>
        <end position="91"/>
    </location>
    <ligand>
        <name>ATP</name>
        <dbReference type="ChEBI" id="CHEBI:30616"/>
    </ligand>
</feature>
<feature type="binding site" evidence="1">
    <location>
        <position position="99"/>
    </location>
    <ligand>
        <name>ATP</name>
        <dbReference type="ChEBI" id="CHEBI:30616"/>
    </ligand>
</feature>
<feature type="binding site" evidence="1">
    <location>
        <begin position="124"/>
        <end position="130"/>
    </location>
    <ligand>
        <name>ATP</name>
        <dbReference type="ChEBI" id="CHEBI:30616"/>
    </ligand>
</feature>
<feature type="site" description="Transition state stabilizer" evidence="1">
    <location>
        <position position="18"/>
    </location>
</feature>
<name>COAD_TOLAT</name>
<keyword id="KW-0067">ATP-binding</keyword>
<keyword id="KW-0173">Coenzyme A biosynthesis</keyword>
<keyword id="KW-0963">Cytoplasm</keyword>
<keyword id="KW-0460">Magnesium</keyword>
<keyword id="KW-0547">Nucleotide-binding</keyword>
<keyword id="KW-0548">Nucleotidyltransferase</keyword>
<keyword id="KW-1185">Reference proteome</keyword>
<keyword id="KW-0808">Transferase</keyword>
<accession>C4L7W3</accession>
<gene>
    <name evidence="1" type="primary">coaD</name>
    <name type="ordered locus">Tola_0132</name>
</gene>
<evidence type="ECO:0000255" key="1">
    <source>
        <dbReference type="HAMAP-Rule" id="MF_00151"/>
    </source>
</evidence>
<sequence length="164" mass="18192">MRQKVVFPGTFDPLTSGHFDLINRASILFDEVILAVAASPGKRPLFSLEERLALAKEVCQSLPNVTITGFSNLLIDFMKEQQATILLRGIRTGSDFEYESQLAAMYRRMMPEMEIIFLPPAEQYAFVSSTLVREIALHGGDAGQFVTPNVAEAIKAKQLQLAQS</sequence>